<comment type="catalytic activity">
    <reaction evidence="2">
        <text>a primary alcohol + NAD(+) = an aldehyde + NADH + H(+)</text>
        <dbReference type="Rhea" id="RHEA:10736"/>
        <dbReference type="ChEBI" id="CHEBI:15378"/>
        <dbReference type="ChEBI" id="CHEBI:15734"/>
        <dbReference type="ChEBI" id="CHEBI:17478"/>
        <dbReference type="ChEBI" id="CHEBI:57540"/>
        <dbReference type="ChEBI" id="CHEBI:57945"/>
        <dbReference type="EC" id="1.1.1.1"/>
    </reaction>
</comment>
<comment type="catalytic activity">
    <reaction evidence="2">
        <text>a secondary alcohol + NAD(+) = a ketone + NADH + H(+)</text>
        <dbReference type="Rhea" id="RHEA:10740"/>
        <dbReference type="ChEBI" id="CHEBI:15378"/>
        <dbReference type="ChEBI" id="CHEBI:17087"/>
        <dbReference type="ChEBI" id="CHEBI:35681"/>
        <dbReference type="ChEBI" id="CHEBI:57540"/>
        <dbReference type="ChEBI" id="CHEBI:57945"/>
        <dbReference type="EC" id="1.1.1.1"/>
    </reaction>
</comment>
<comment type="cofactor">
    <cofactor evidence="2">
        <name>Zn(2+)</name>
        <dbReference type="ChEBI" id="CHEBI:29105"/>
    </cofactor>
    <text evidence="2">Binds 2 Zn(2+) ions per subunit.</text>
</comment>
<comment type="subunit">
    <text evidence="2">Homodimer.</text>
</comment>
<comment type="subcellular location">
    <subcellularLocation>
        <location evidence="2">Cytoplasm</location>
    </subcellularLocation>
</comment>
<comment type="similarity">
    <text evidence="3">Belongs to the zinc-containing alcohol dehydrogenase family.</text>
</comment>
<reference key="1">
    <citation type="online journal article" date="1996" name="Plant Gene Register">
        <title>An alcohol dehydrogenase cDNA clone isolated from apple fruit.</title>
        <authorList>
            <person name="Reid S.J."/>
            <person name="Watkins C.B."/>
            <person name="Janssen B.-J."/>
            <person name="Ross G.S."/>
        </authorList>
        <locator>PGR96-043</locator>
    </citation>
    <scope>NUCLEOTIDE SEQUENCE [MRNA]</scope>
    <source>
        <strain>cv. Granny Smith</strain>
        <tissue>Fruit cortical tissue</tissue>
    </source>
</reference>
<protein>
    <recommendedName>
        <fullName>Alcohol dehydrogenase</fullName>
        <ecNumber evidence="2">1.1.1.1</ecNumber>
    </recommendedName>
</protein>
<accession>P48977</accession>
<evidence type="ECO:0000250" key="1">
    <source>
        <dbReference type="UniProtKB" id="P00327"/>
    </source>
</evidence>
<evidence type="ECO:0000250" key="2">
    <source>
        <dbReference type="UniProtKB" id="P06525"/>
    </source>
</evidence>
<evidence type="ECO:0000305" key="3"/>
<feature type="chain" id="PRO_0000160706" description="Alcohol dehydrogenase">
    <location>
        <begin position="1"/>
        <end position="380"/>
    </location>
</feature>
<feature type="binding site" evidence="2">
    <location>
        <position position="48"/>
    </location>
    <ligand>
        <name>Zn(2+)</name>
        <dbReference type="ChEBI" id="CHEBI:29105"/>
        <label>1</label>
        <note>catalytic</note>
    </ligand>
</feature>
<feature type="binding site" evidence="2">
    <location>
        <position position="50"/>
    </location>
    <ligand>
        <name>an alcohol</name>
        <dbReference type="ChEBI" id="CHEBI:30879"/>
    </ligand>
</feature>
<feature type="binding site" evidence="2">
    <location>
        <position position="50"/>
    </location>
    <ligand>
        <name>NAD(+)</name>
        <dbReference type="ChEBI" id="CHEBI:57540"/>
    </ligand>
</feature>
<feature type="binding site" evidence="2">
    <location>
        <position position="50"/>
    </location>
    <ligand>
        <name>Zn(2+)</name>
        <dbReference type="ChEBI" id="CHEBI:29105"/>
        <label>1</label>
        <note>catalytic</note>
    </ligand>
</feature>
<feature type="binding site" evidence="1">
    <location>
        <position position="70"/>
    </location>
    <ligand>
        <name>an alcohol</name>
        <dbReference type="ChEBI" id="CHEBI:30879"/>
    </ligand>
</feature>
<feature type="binding site" evidence="2">
    <location>
        <position position="70"/>
    </location>
    <ligand>
        <name>Zn(2+)</name>
        <dbReference type="ChEBI" id="CHEBI:29105"/>
        <label>1</label>
        <note>catalytic</note>
    </ligand>
</feature>
<feature type="binding site" evidence="2">
    <location>
        <position position="100"/>
    </location>
    <ligand>
        <name>Zn(2+)</name>
        <dbReference type="ChEBI" id="CHEBI:29105"/>
        <label>2</label>
    </ligand>
</feature>
<feature type="binding site" evidence="2">
    <location>
        <position position="103"/>
    </location>
    <ligand>
        <name>Zn(2+)</name>
        <dbReference type="ChEBI" id="CHEBI:29105"/>
        <label>2</label>
    </ligand>
</feature>
<feature type="binding site" evidence="2">
    <location>
        <position position="106"/>
    </location>
    <ligand>
        <name>Zn(2+)</name>
        <dbReference type="ChEBI" id="CHEBI:29105"/>
        <label>2</label>
    </ligand>
</feature>
<feature type="binding site" evidence="2">
    <location>
        <position position="114"/>
    </location>
    <ligand>
        <name>Zn(2+)</name>
        <dbReference type="ChEBI" id="CHEBI:29105"/>
        <label>2</label>
    </ligand>
</feature>
<feature type="binding site" evidence="2">
    <location>
        <position position="178"/>
    </location>
    <ligand>
        <name>Zn(2+)</name>
        <dbReference type="ChEBI" id="CHEBI:29105"/>
        <label>1</label>
        <note>catalytic</note>
    </ligand>
</feature>
<feature type="binding site" evidence="2">
    <location>
        <begin position="203"/>
        <end position="208"/>
    </location>
    <ligand>
        <name>NAD(+)</name>
        <dbReference type="ChEBI" id="CHEBI:57540"/>
    </ligand>
</feature>
<feature type="binding site" evidence="2">
    <location>
        <position position="227"/>
    </location>
    <ligand>
        <name>NAD(+)</name>
        <dbReference type="ChEBI" id="CHEBI:57540"/>
    </ligand>
</feature>
<feature type="binding site" evidence="2">
    <location>
        <position position="232"/>
    </location>
    <ligand>
        <name>NAD(+)</name>
        <dbReference type="ChEBI" id="CHEBI:57540"/>
    </ligand>
</feature>
<feature type="binding site" evidence="2">
    <location>
        <position position="273"/>
    </location>
    <ligand>
        <name>NAD(+)</name>
        <dbReference type="ChEBI" id="CHEBI:57540"/>
    </ligand>
</feature>
<feature type="binding site" evidence="1">
    <location>
        <begin position="296"/>
        <end position="298"/>
    </location>
    <ligand>
        <name>NAD(+)</name>
        <dbReference type="ChEBI" id="CHEBI:57540"/>
    </ligand>
</feature>
<feature type="binding site" evidence="2">
    <location>
        <position position="296"/>
    </location>
    <ligand>
        <name>NAD(+)</name>
        <dbReference type="ChEBI" id="CHEBI:57540"/>
    </ligand>
</feature>
<feature type="binding site" evidence="2">
    <location>
        <position position="323"/>
    </location>
    <ligand>
        <name>NAD(+)</name>
        <dbReference type="ChEBI" id="CHEBI:57540"/>
    </ligand>
</feature>
<feature type="binding site" evidence="2">
    <location>
        <position position="373"/>
    </location>
    <ligand>
        <name>NAD(+)</name>
        <dbReference type="ChEBI" id="CHEBI:57540"/>
    </ligand>
</feature>
<name>ADH_MALDO</name>
<keyword id="KW-0963">Cytoplasm</keyword>
<keyword id="KW-0479">Metal-binding</keyword>
<keyword id="KW-0520">NAD</keyword>
<keyword id="KW-0560">Oxidoreductase</keyword>
<keyword id="KW-0862">Zinc</keyword>
<sequence>MSNTAGQVIRCRAAVAWEAGKPLVIEEVEVAPPQANEVRIKILFTSLCHTDVYFWEAKGQNPLFPRIYGHEAGGIVESVGEGVTDLKAGDHVLPVFTGECKDCAHCKSEESNMCDLLRINTDRGVMLSDGKSRFSIKGKPIYHFVGTSTFSEYTVVHVGCLAKINPSAPLDKVCLLSCGISTGLGATLNVAKPKKGSTVAVFGLGAVGLAAAEGARLSGASRIIGVDLHSDRFEEAKKFGVTEFVNPKAHEKPVQEVIAELTNRGVDRSIECTGSTEAMISAFECVHDGWGVAVLVGVPHKDAVFKTHPVNFLNERTLKGTFFGNYKTRTDIPSVVEKYMNKELELEKFITHKVPFSEINKAFEYMLKGEGLRCIIRMEE</sequence>
<gene>
    <name type="primary">ADH</name>
</gene>
<proteinExistence type="evidence at transcript level"/>
<organism>
    <name type="scientific">Malus domestica</name>
    <name type="common">Apple</name>
    <name type="synonym">Pyrus malus</name>
    <dbReference type="NCBI Taxonomy" id="3750"/>
    <lineage>
        <taxon>Eukaryota</taxon>
        <taxon>Viridiplantae</taxon>
        <taxon>Streptophyta</taxon>
        <taxon>Embryophyta</taxon>
        <taxon>Tracheophyta</taxon>
        <taxon>Spermatophyta</taxon>
        <taxon>Magnoliopsida</taxon>
        <taxon>eudicotyledons</taxon>
        <taxon>Gunneridae</taxon>
        <taxon>Pentapetalae</taxon>
        <taxon>rosids</taxon>
        <taxon>fabids</taxon>
        <taxon>Rosales</taxon>
        <taxon>Rosaceae</taxon>
        <taxon>Amygdaloideae</taxon>
        <taxon>Maleae</taxon>
        <taxon>Malus</taxon>
    </lineage>
</organism>
<dbReference type="EC" id="1.1.1.1" evidence="2"/>
<dbReference type="EMBL" id="Z48234">
    <property type="protein sequence ID" value="CAA88271.1"/>
    <property type="molecule type" value="mRNA"/>
</dbReference>
<dbReference type="PIR" id="S57650">
    <property type="entry name" value="S57650"/>
</dbReference>
<dbReference type="RefSeq" id="NP_001315822.1">
    <property type="nucleotide sequence ID" value="NM_001328893.1"/>
</dbReference>
<dbReference type="SMR" id="P48977"/>
<dbReference type="GeneID" id="103428551"/>
<dbReference type="KEGG" id="mdm:103428551"/>
<dbReference type="OrthoDB" id="417550at2759"/>
<dbReference type="GO" id="GO:0005829">
    <property type="term" value="C:cytosol"/>
    <property type="evidence" value="ECO:0007669"/>
    <property type="project" value="TreeGrafter"/>
</dbReference>
<dbReference type="GO" id="GO:0004022">
    <property type="term" value="F:alcohol dehydrogenase (NAD+) activity"/>
    <property type="evidence" value="ECO:0007669"/>
    <property type="project" value="UniProtKB-EC"/>
</dbReference>
<dbReference type="GO" id="GO:0051903">
    <property type="term" value="F:S-(hydroxymethyl)glutathione dehydrogenase [NAD(P)+] activity"/>
    <property type="evidence" value="ECO:0007669"/>
    <property type="project" value="TreeGrafter"/>
</dbReference>
<dbReference type="GO" id="GO:0008270">
    <property type="term" value="F:zinc ion binding"/>
    <property type="evidence" value="ECO:0007669"/>
    <property type="project" value="InterPro"/>
</dbReference>
<dbReference type="GO" id="GO:0046294">
    <property type="term" value="P:formaldehyde catabolic process"/>
    <property type="evidence" value="ECO:0007669"/>
    <property type="project" value="TreeGrafter"/>
</dbReference>
<dbReference type="CDD" id="cd08301">
    <property type="entry name" value="alcohol_DH_plants"/>
    <property type="match status" value="1"/>
</dbReference>
<dbReference type="FunFam" id="3.90.180.10:FF:000067">
    <property type="entry name" value="alcohol dehydrogenase 1-like isoform X1"/>
    <property type="match status" value="1"/>
</dbReference>
<dbReference type="FunFam" id="3.40.50.720:FF:001292">
    <property type="entry name" value="Alcohol dehydrogenase class-P"/>
    <property type="match status" value="1"/>
</dbReference>
<dbReference type="Gene3D" id="3.90.180.10">
    <property type="entry name" value="Medium-chain alcohol dehydrogenases, catalytic domain"/>
    <property type="match status" value="1"/>
</dbReference>
<dbReference type="Gene3D" id="3.40.50.720">
    <property type="entry name" value="NAD(P)-binding Rossmann-like Domain"/>
    <property type="match status" value="1"/>
</dbReference>
<dbReference type="InterPro" id="IPR013149">
    <property type="entry name" value="ADH-like_C"/>
</dbReference>
<dbReference type="InterPro" id="IPR013154">
    <property type="entry name" value="ADH-like_N"/>
</dbReference>
<dbReference type="InterPro" id="IPR002328">
    <property type="entry name" value="ADH_Zn_CS"/>
</dbReference>
<dbReference type="InterPro" id="IPR011032">
    <property type="entry name" value="GroES-like_sf"/>
</dbReference>
<dbReference type="InterPro" id="IPR036291">
    <property type="entry name" value="NAD(P)-bd_dom_sf"/>
</dbReference>
<dbReference type="PANTHER" id="PTHR43880">
    <property type="entry name" value="ALCOHOL DEHYDROGENASE"/>
    <property type="match status" value="1"/>
</dbReference>
<dbReference type="PANTHER" id="PTHR43880:SF40">
    <property type="entry name" value="ALCOHOL DEHYDROGENASE 2"/>
    <property type="match status" value="1"/>
</dbReference>
<dbReference type="Pfam" id="PF08240">
    <property type="entry name" value="ADH_N"/>
    <property type="match status" value="1"/>
</dbReference>
<dbReference type="Pfam" id="PF00107">
    <property type="entry name" value="ADH_zinc_N"/>
    <property type="match status" value="1"/>
</dbReference>
<dbReference type="SUPFAM" id="SSF50129">
    <property type="entry name" value="GroES-like"/>
    <property type="match status" value="2"/>
</dbReference>
<dbReference type="SUPFAM" id="SSF51735">
    <property type="entry name" value="NAD(P)-binding Rossmann-fold domains"/>
    <property type="match status" value="1"/>
</dbReference>
<dbReference type="PROSITE" id="PS00059">
    <property type="entry name" value="ADH_ZINC"/>
    <property type="match status" value="1"/>
</dbReference>